<comment type="subcellular location">
    <subcellularLocation>
        <location evidence="3">Secreted</location>
    </subcellularLocation>
</comment>
<comment type="caution">
    <text evidence="3">Product of a dubious CDS prediction. May be a non-coding RNA.</text>
</comment>
<dbReference type="EMBL" id="AK094862">
    <property type="protein sequence ID" value="BAC04439.1"/>
    <property type="molecule type" value="mRNA"/>
</dbReference>
<dbReference type="EMBL" id="CH471137">
    <property type="protein sequence ID" value="EAW51393.1"/>
    <property type="molecule type" value="Genomic_DNA"/>
</dbReference>
<dbReference type="EMBL" id="BC112008">
    <property type="protein sequence ID" value="AAI12009.1"/>
    <property type="molecule type" value="mRNA"/>
</dbReference>
<dbReference type="EMBL" id="BC111982">
    <property type="protein sequence ID" value="AAI11983.1"/>
    <property type="molecule type" value="mRNA"/>
</dbReference>
<dbReference type="RefSeq" id="NP_775938.1">
    <property type="nucleotide sequence ID" value="NM_173667.3"/>
</dbReference>
<dbReference type="BioGRID" id="130173">
    <property type="interactions" value="6"/>
</dbReference>
<dbReference type="FunCoup" id="Q2M2E5">
    <property type="interactions" value="2"/>
</dbReference>
<dbReference type="IntAct" id="Q2M2E5">
    <property type="interactions" value="3"/>
</dbReference>
<dbReference type="iPTMnet" id="Q2M2E5"/>
<dbReference type="PhosphoSitePlus" id="Q2M2E5"/>
<dbReference type="BioMuta" id="HGNC:26744"/>
<dbReference type="MassIVE" id="Q2M2E5"/>
<dbReference type="PaxDb" id="9606-ENSP00000485493"/>
<dbReference type="ProteomicsDB" id="61351"/>
<dbReference type="AGR" id="HGNC:26744"/>
<dbReference type="GeneCards" id="LINC03122"/>
<dbReference type="HGNC" id="HGNC:26744">
    <property type="gene designation" value="LINC03122"/>
</dbReference>
<dbReference type="neXtProt" id="NX_Q2M2E5"/>
<dbReference type="eggNOG" id="ENOG502TECM">
    <property type="taxonomic scope" value="Eukaryota"/>
</dbReference>
<dbReference type="InParanoid" id="Q2M2E5"/>
<dbReference type="PAN-GO" id="Q2M2E5">
    <property type="GO annotations" value="0 GO annotations based on evolutionary models"/>
</dbReference>
<dbReference type="PhylomeDB" id="Q2M2E5"/>
<dbReference type="TreeFam" id="TF342450"/>
<dbReference type="PathwayCommons" id="Q2M2E5"/>
<dbReference type="SignaLink" id="Q2M2E5"/>
<dbReference type="BioGRID-ORCS" id="285668">
    <property type="hits" value="11 hits in 1118 CRISPR screens"/>
</dbReference>
<dbReference type="ChiTaRS" id="C5orf64">
    <property type="organism name" value="human"/>
</dbReference>
<dbReference type="GenomeRNAi" id="285668"/>
<dbReference type="Pharos" id="Q2M2E5">
    <property type="development level" value="Tdark"/>
</dbReference>
<dbReference type="PRO" id="PR:Q2M2E5"/>
<dbReference type="Proteomes" id="UP000005640">
    <property type="component" value="Unplaced"/>
</dbReference>
<dbReference type="RNAct" id="Q2M2E5">
    <property type="molecule type" value="protein"/>
</dbReference>
<dbReference type="GO" id="GO:0005576">
    <property type="term" value="C:extracellular region"/>
    <property type="evidence" value="ECO:0007669"/>
    <property type="project" value="UniProtKB-SubCell"/>
</dbReference>
<name>CE064_HUMAN</name>
<sequence>MLAPLFLCCLRNLFRKLISFQPPQLGRTNMHYSKLPRTAIETEFKQNVGPPPKDLTAEVYFPSIKSRSHLPAVFYNQYFKHPKCVGEYGPKNGAERQIEERKVLPTTMMFSMLADCVLKSTPIPILGVAM</sequence>
<organism>
    <name type="scientific">Homo sapiens</name>
    <name type="common">Human</name>
    <dbReference type="NCBI Taxonomy" id="9606"/>
    <lineage>
        <taxon>Eukaryota</taxon>
        <taxon>Metazoa</taxon>
        <taxon>Chordata</taxon>
        <taxon>Craniata</taxon>
        <taxon>Vertebrata</taxon>
        <taxon>Euteleostomi</taxon>
        <taxon>Mammalia</taxon>
        <taxon>Eutheria</taxon>
        <taxon>Euarchontoglires</taxon>
        <taxon>Primates</taxon>
        <taxon>Haplorrhini</taxon>
        <taxon>Catarrhini</taxon>
        <taxon>Hominidae</taxon>
        <taxon>Homo</taxon>
    </lineage>
</organism>
<protein>
    <recommendedName>
        <fullName>Uncharacterized protein encoded by LINC03122</fullName>
    </recommendedName>
    <alternativeName>
        <fullName>Long intergenic non-protein coding RNA 3122</fullName>
    </alternativeName>
</protein>
<proteinExistence type="uncertain"/>
<accession>Q2M2E5</accession>
<accession>Q2M2H1</accession>
<accession>Q8N1U8</accession>
<gene>
    <name evidence="4" type="primary">LINC03122</name>
    <name evidence="4" type="synonym">C5orf64</name>
</gene>
<feature type="signal peptide" evidence="1">
    <location>
        <begin position="1"/>
        <end position="19"/>
    </location>
</feature>
<feature type="chain" id="PRO_0000339305" description="Uncharacterized protein encoded by LINC03122">
    <location>
        <begin position="20"/>
        <end position="130"/>
    </location>
</feature>
<feature type="sequence variant" id="VAR_043940" description="In dbSNP:rs16893687." evidence="2">
    <original>A</original>
    <variation>T</variation>
    <location>
        <position position="57"/>
    </location>
</feature>
<feature type="sequence variant" id="VAR_043941" description="In dbSNP:rs436696." evidence="2">
    <original>R</original>
    <variation>W</variation>
    <location>
        <position position="101"/>
    </location>
</feature>
<evidence type="ECO:0000255" key="1"/>
<evidence type="ECO:0000269" key="2">
    <source>
    </source>
</evidence>
<evidence type="ECO:0000305" key="3"/>
<evidence type="ECO:0000312" key="4">
    <source>
        <dbReference type="HGNC" id="HGNC:26744"/>
    </source>
</evidence>
<reference key="1">
    <citation type="journal article" date="2004" name="Nat. Genet.">
        <title>Complete sequencing and characterization of 21,243 full-length human cDNAs.</title>
        <authorList>
            <person name="Ota T."/>
            <person name="Suzuki Y."/>
            <person name="Nishikawa T."/>
            <person name="Otsuki T."/>
            <person name="Sugiyama T."/>
            <person name="Irie R."/>
            <person name="Wakamatsu A."/>
            <person name="Hayashi K."/>
            <person name="Sato H."/>
            <person name="Nagai K."/>
            <person name="Kimura K."/>
            <person name="Makita H."/>
            <person name="Sekine M."/>
            <person name="Obayashi M."/>
            <person name="Nishi T."/>
            <person name="Shibahara T."/>
            <person name="Tanaka T."/>
            <person name="Ishii S."/>
            <person name="Yamamoto J."/>
            <person name="Saito K."/>
            <person name="Kawai Y."/>
            <person name="Isono Y."/>
            <person name="Nakamura Y."/>
            <person name="Nagahari K."/>
            <person name="Murakami K."/>
            <person name="Yasuda T."/>
            <person name="Iwayanagi T."/>
            <person name="Wagatsuma M."/>
            <person name="Shiratori A."/>
            <person name="Sudo H."/>
            <person name="Hosoiri T."/>
            <person name="Kaku Y."/>
            <person name="Kodaira H."/>
            <person name="Kondo H."/>
            <person name="Sugawara M."/>
            <person name="Takahashi M."/>
            <person name="Kanda K."/>
            <person name="Yokoi T."/>
            <person name="Furuya T."/>
            <person name="Kikkawa E."/>
            <person name="Omura Y."/>
            <person name="Abe K."/>
            <person name="Kamihara K."/>
            <person name="Katsuta N."/>
            <person name="Sato K."/>
            <person name="Tanikawa M."/>
            <person name="Yamazaki M."/>
            <person name="Ninomiya K."/>
            <person name="Ishibashi T."/>
            <person name="Yamashita H."/>
            <person name="Murakawa K."/>
            <person name="Fujimori K."/>
            <person name="Tanai H."/>
            <person name="Kimata M."/>
            <person name="Watanabe M."/>
            <person name="Hiraoka S."/>
            <person name="Chiba Y."/>
            <person name="Ishida S."/>
            <person name="Ono Y."/>
            <person name="Takiguchi S."/>
            <person name="Watanabe S."/>
            <person name="Yosida M."/>
            <person name="Hotuta T."/>
            <person name="Kusano J."/>
            <person name="Kanehori K."/>
            <person name="Takahashi-Fujii A."/>
            <person name="Hara H."/>
            <person name="Tanase T.-O."/>
            <person name="Nomura Y."/>
            <person name="Togiya S."/>
            <person name="Komai F."/>
            <person name="Hara R."/>
            <person name="Takeuchi K."/>
            <person name="Arita M."/>
            <person name="Imose N."/>
            <person name="Musashino K."/>
            <person name="Yuuki H."/>
            <person name="Oshima A."/>
            <person name="Sasaki N."/>
            <person name="Aotsuka S."/>
            <person name="Yoshikawa Y."/>
            <person name="Matsunawa H."/>
            <person name="Ichihara T."/>
            <person name="Shiohata N."/>
            <person name="Sano S."/>
            <person name="Moriya S."/>
            <person name="Momiyama H."/>
            <person name="Satoh N."/>
            <person name="Takami S."/>
            <person name="Terashima Y."/>
            <person name="Suzuki O."/>
            <person name="Nakagawa S."/>
            <person name="Senoh A."/>
            <person name="Mizoguchi H."/>
            <person name="Goto Y."/>
            <person name="Shimizu F."/>
            <person name="Wakebe H."/>
            <person name="Hishigaki H."/>
            <person name="Watanabe T."/>
            <person name="Sugiyama A."/>
            <person name="Takemoto M."/>
            <person name="Kawakami B."/>
            <person name="Yamazaki M."/>
            <person name="Watanabe K."/>
            <person name="Kumagai A."/>
            <person name="Itakura S."/>
            <person name="Fukuzumi Y."/>
            <person name="Fujimori Y."/>
            <person name="Komiyama M."/>
            <person name="Tashiro H."/>
            <person name="Tanigami A."/>
            <person name="Fujiwara T."/>
            <person name="Ono T."/>
            <person name="Yamada K."/>
            <person name="Fujii Y."/>
            <person name="Ozaki K."/>
            <person name="Hirao M."/>
            <person name="Ohmori Y."/>
            <person name="Kawabata A."/>
            <person name="Hikiji T."/>
            <person name="Kobatake N."/>
            <person name="Inagaki H."/>
            <person name="Ikema Y."/>
            <person name="Okamoto S."/>
            <person name="Okitani R."/>
            <person name="Kawakami T."/>
            <person name="Noguchi S."/>
            <person name="Itoh T."/>
            <person name="Shigeta K."/>
            <person name="Senba T."/>
            <person name="Matsumura K."/>
            <person name="Nakajima Y."/>
            <person name="Mizuno T."/>
            <person name="Morinaga M."/>
            <person name="Sasaki M."/>
            <person name="Togashi T."/>
            <person name="Oyama M."/>
            <person name="Hata H."/>
            <person name="Watanabe M."/>
            <person name="Komatsu T."/>
            <person name="Mizushima-Sugano J."/>
            <person name="Satoh T."/>
            <person name="Shirai Y."/>
            <person name="Takahashi Y."/>
            <person name="Nakagawa K."/>
            <person name="Okumura K."/>
            <person name="Nagase T."/>
            <person name="Nomura N."/>
            <person name="Kikuchi H."/>
            <person name="Masuho Y."/>
            <person name="Yamashita R."/>
            <person name="Nakai K."/>
            <person name="Yada T."/>
            <person name="Nakamura Y."/>
            <person name="Ohara O."/>
            <person name="Isogai T."/>
            <person name="Sugano S."/>
        </authorList>
    </citation>
    <scope>NUCLEOTIDE SEQUENCE [LARGE SCALE MRNA]</scope>
    <source>
        <tissue>Caudate nucleus</tissue>
    </source>
</reference>
<reference key="2">
    <citation type="submission" date="2005-09" db="EMBL/GenBank/DDBJ databases">
        <authorList>
            <person name="Mural R.J."/>
            <person name="Istrail S."/>
            <person name="Sutton G.G."/>
            <person name="Florea L."/>
            <person name="Halpern A.L."/>
            <person name="Mobarry C.M."/>
            <person name="Lippert R."/>
            <person name="Walenz B."/>
            <person name="Shatkay H."/>
            <person name="Dew I."/>
            <person name="Miller J.R."/>
            <person name="Flanigan M.J."/>
            <person name="Edwards N.J."/>
            <person name="Bolanos R."/>
            <person name="Fasulo D."/>
            <person name="Halldorsson B.V."/>
            <person name="Hannenhalli S."/>
            <person name="Turner R."/>
            <person name="Yooseph S."/>
            <person name="Lu F."/>
            <person name="Nusskern D.R."/>
            <person name="Shue B.C."/>
            <person name="Zheng X.H."/>
            <person name="Zhong F."/>
            <person name="Delcher A.L."/>
            <person name="Huson D.H."/>
            <person name="Kravitz S.A."/>
            <person name="Mouchard L."/>
            <person name="Reinert K."/>
            <person name="Remington K.A."/>
            <person name="Clark A.G."/>
            <person name="Waterman M.S."/>
            <person name="Eichler E.E."/>
            <person name="Adams M.D."/>
            <person name="Hunkapiller M.W."/>
            <person name="Myers E.W."/>
            <person name="Venter J.C."/>
        </authorList>
    </citation>
    <scope>NUCLEOTIDE SEQUENCE [LARGE SCALE GENOMIC DNA]</scope>
</reference>
<reference key="3">
    <citation type="journal article" date="2004" name="Genome Res.">
        <title>The status, quality, and expansion of the NIH full-length cDNA project: the Mammalian Gene Collection (MGC).</title>
        <authorList>
            <consortium name="The MGC Project Team"/>
        </authorList>
    </citation>
    <scope>NUCLEOTIDE SEQUENCE [LARGE SCALE MRNA]</scope>
    <scope>VARIANTS THR-57 AND TRP-101</scope>
</reference>
<keyword id="KW-1185">Reference proteome</keyword>
<keyword id="KW-0964">Secreted</keyword>
<keyword id="KW-0732">Signal</keyword>